<sequence>MQTRKTLSWIKEEITRSISLSLMLSIITHASLSNAYPIFAQQGYENPREATGRIVCANCHLANKPVDIEVPQTVLPDTVFEAVVRIPYDMQIKQVLANGKKGALNVGAVLILPEGFELAPPDRISPEMKEKIGNLPFQSYRPTQKNILVIGPVPGQKYSEIAFPILSPNPETNKDVHFLKYPIYVGGNRGRGQIYPDGSKSNNTVSNATAAGIVSKIIRKERGGYEITIADASNGRQVVDIIPPGPELLVSEGESLKVDQPLTSNPNVGGFGQGDAEIVLQDPLRVQGLLFFLTSVLLAQIFLVLKKKQFEKVQLSEMNF</sequence>
<organism>
    <name type="scientific">Pelargonium hortorum</name>
    <name type="common">Common geranium</name>
    <name type="synonym">Pelargonium inquinans x Pelargonium zonale</name>
    <dbReference type="NCBI Taxonomy" id="4031"/>
    <lineage>
        <taxon>Eukaryota</taxon>
        <taxon>Viridiplantae</taxon>
        <taxon>Streptophyta</taxon>
        <taxon>Embryophyta</taxon>
        <taxon>Tracheophyta</taxon>
        <taxon>Spermatophyta</taxon>
        <taxon>Magnoliopsida</taxon>
        <taxon>eudicotyledons</taxon>
        <taxon>Gunneridae</taxon>
        <taxon>Pentapetalae</taxon>
        <taxon>rosids</taxon>
        <taxon>malvids</taxon>
        <taxon>Geraniales</taxon>
        <taxon>Geraniaceae</taxon>
        <taxon>Pelargonium</taxon>
    </lineage>
</organism>
<evidence type="ECO:0000250" key="1"/>
<evidence type="ECO:0000255" key="2">
    <source>
        <dbReference type="HAMAP-Rule" id="MF_00610"/>
    </source>
</evidence>
<proteinExistence type="inferred from homology"/>
<protein>
    <recommendedName>
        <fullName evidence="2">Cytochrome f</fullName>
    </recommendedName>
</protein>
<accession>Q06FL3</accession>
<keyword id="KW-0150">Chloroplast</keyword>
<keyword id="KW-0249">Electron transport</keyword>
<keyword id="KW-0349">Heme</keyword>
<keyword id="KW-0408">Iron</keyword>
<keyword id="KW-0472">Membrane</keyword>
<keyword id="KW-0479">Metal-binding</keyword>
<keyword id="KW-0602">Photosynthesis</keyword>
<keyword id="KW-0934">Plastid</keyword>
<keyword id="KW-0732">Signal</keyword>
<keyword id="KW-0793">Thylakoid</keyword>
<keyword id="KW-0812">Transmembrane</keyword>
<keyword id="KW-1133">Transmembrane helix</keyword>
<keyword id="KW-0813">Transport</keyword>
<reference key="1">
    <citation type="journal article" date="2006" name="Mol. Biol. Evol.">
        <title>The complete chloroplast genome sequence of Pelargonium x hortorum: organization and evolution of the largest and most highly rearranged chloroplast genome of land plants.</title>
        <authorList>
            <person name="Chumley T.W."/>
            <person name="Palmer J.D."/>
            <person name="Mower J.P."/>
            <person name="Fourcade H.M."/>
            <person name="Calie P.J."/>
            <person name="Boore J.L."/>
            <person name="Jansen R.K."/>
        </authorList>
    </citation>
    <scope>NUCLEOTIDE SEQUENCE [LARGE SCALE GENOMIC DNA]</scope>
    <source>
        <strain>cv. Ringo White</strain>
    </source>
</reference>
<gene>
    <name evidence="2" type="primary">petA-A</name>
</gene>
<gene>
    <name evidence="2" type="primary">petA-B</name>
</gene>
<feature type="signal peptide" evidence="2">
    <location>
        <begin position="1"/>
        <end position="35"/>
    </location>
</feature>
<feature type="chain" id="PRO_0000275437" description="Cytochrome f">
    <location>
        <begin position="36"/>
        <end position="320"/>
    </location>
</feature>
<feature type="transmembrane region" description="Helical" evidence="2">
    <location>
        <begin position="286"/>
        <end position="306"/>
    </location>
</feature>
<feature type="binding site" description="axial binding residue" evidence="2">
    <location>
        <position position="36"/>
    </location>
    <ligand>
        <name>heme</name>
        <dbReference type="ChEBI" id="CHEBI:30413"/>
    </ligand>
    <ligandPart>
        <name>Fe</name>
        <dbReference type="ChEBI" id="CHEBI:18248"/>
    </ligandPart>
</feature>
<feature type="binding site" description="covalent" evidence="2">
    <location>
        <position position="56"/>
    </location>
    <ligand>
        <name>heme</name>
        <dbReference type="ChEBI" id="CHEBI:30413"/>
    </ligand>
</feature>
<feature type="binding site" description="covalent" evidence="2">
    <location>
        <position position="59"/>
    </location>
    <ligand>
        <name>heme</name>
        <dbReference type="ChEBI" id="CHEBI:30413"/>
    </ligand>
</feature>
<feature type="binding site" description="axial binding residue" evidence="2">
    <location>
        <position position="60"/>
    </location>
    <ligand>
        <name>heme</name>
        <dbReference type="ChEBI" id="CHEBI:30413"/>
    </ligand>
    <ligandPart>
        <name>Fe</name>
        <dbReference type="ChEBI" id="CHEBI:18248"/>
    </ligandPart>
</feature>
<name>CYF_PELHO</name>
<comment type="function">
    <text evidence="2">Component of the cytochrome b6-f complex, which mediates electron transfer between photosystem II (PSII) and photosystem I (PSI), cyclic electron flow around PSI, and state transitions.</text>
</comment>
<comment type="cofactor">
    <cofactor evidence="2">
        <name>heme</name>
        <dbReference type="ChEBI" id="CHEBI:30413"/>
    </cofactor>
    <text evidence="2">Binds 1 heme group covalently.</text>
</comment>
<comment type="subunit">
    <text evidence="1">The 4 large subunits of the cytochrome b6-f complex are cytochrome b6, subunit IV (17 kDa polypeptide, petD), cytochrome f and the Rieske protein, while the 4 small subunits are PetG, PetL, PetM and PetN. The complex functions as a dimer (By similarity).</text>
</comment>
<comment type="subcellular location">
    <subcellularLocation>
        <location evidence="2">Plastid</location>
        <location evidence="2">Chloroplast thylakoid membrane</location>
        <topology evidence="2">Single-pass membrane protein</topology>
    </subcellularLocation>
</comment>
<comment type="similarity">
    <text evidence="2">Belongs to the cytochrome f family.</text>
</comment>
<geneLocation type="chloroplast"/>
<dbReference type="EMBL" id="DQ897681">
    <property type="protein sequence ID" value="ABI17279.1"/>
    <property type="molecule type" value="Genomic_DNA"/>
</dbReference>
<dbReference type="EMBL" id="DQ897681">
    <property type="protein sequence ID" value="ABI17359.1"/>
    <property type="molecule type" value="Genomic_DNA"/>
</dbReference>
<dbReference type="SMR" id="Q06FL3"/>
<dbReference type="GO" id="GO:0009535">
    <property type="term" value="C:chloroplast thylakoid membrane"/>
    <property type="evidence" value="ECO:0007669"/>
    <property type="project" value="UniProtKB-SubCell"/>
</dbReference>
<dbReference type="GO" id="GO:0009055">
    <property type="term" value="F:electron transfer activity"/>
    <property type="evidence" value="ECO:0007669"/>
    <property type="project" value="UniProtKB-UniRule"/>
</dbReference>
<dbReference type="GO" id="GO:0020037">
    <property type="term" value="F:heme binding"/>
    <property type="evidence" value="ECO:0007669"/>
    <property type="project" value="InterPro"/>
</dbReference>
<dbReference type="GO" id="GO:0005506">
    <property type="term" value="F:iron ion binding"/>
    <property type="evidence" value="ECO:0007669"/>
    <property type="project" value="InterPro"/>
</dbReference>
<dbReference type="GO" id="GO:0015979">
    <property type="term" value="P:photosynthesis"/>
    <property type="evidence" value="ECO:0007669"/>
    <property type="project" value="UniProtKB-UniRule"/>
</dbReference>
<dbReference type="FunFam" id="1.20.5.700:FF:000001">
    <property type="entry name" value="Cytochrome f"/>
    <property type="match status" value="1"/>
</dbReference>
<dbReference type="FunFam" id="2.40.50.100:FF:000007">
    <property type="entry name" value="Cytochrome f"/>
    <property type="match status" value="1"/>
</dbReference>
<dbReference type="FunFam" id="2.60.40.830:FF:000001">
    <property type="entry name" value="Cytochrome f"/>
    <property type="match status" value="1"/>
</dbReference>
<dbReference type="Gene3D" id="2.40.50.100">
    <property type="match status" value="1"/>
</dbReference>
<dbReference type="Gene3D" id="2.60.40.830">
    <property type="entry name" value="Cytochrome f large domain"/>
    <property type="match status" value="1"/>
</dbReference>
<dbReference type="Gene3D" id="1.20.5.700">
    <property type="entry name" value="Single helix bin"/>
    <property type="match status" value="1"/>
</dbReference>
<dbReference type="HAMAP" id="MF_00610">
    <property type="entry name" value="Cytb6_f_cytF"/>
    <property type="match status" value="1"/>
</dbReference>
<dbReference type="InterPro" id="IPR024058">
    <property type="entry name" value="Cyt-f_TM"/>
</dbReference>
<dbReference type="InterPro" id="IPR002325">
    <property type="entry name" value="Cyt_f"/>
</dbReference>
<dbReference type="InterPro" id="IPR024094">
    <property type="entry name" value="Cyt_f_lg_dom"/>
</dbReference>
<dbReference type="InterPro" id="IPR036826">
    <property type="entry name" value="Cyt_f_lg_dom_sf"/>
</dbReference>
<dbReference type="InterPro" id="IPR011054">
    <property type="entry name" value="Rudment_hybrid_motif"/>
</dbReference>
<dbReference type="PANTHER" id="PTHR33288">
    <property type="match status" value="1"/>
</dbReference>
<dbReference type="PANTHER" id="PTHR33288:SF10">
    <property type="entry name" value="CYTOCHROME F"/>
    <property type="match status" value="1"/>
</dbReference>
<dbReference type="Pfam" id="PF01333">
    <property type="entry name" value="Apocytochr_F_C"/>
    <property type="match status" value="1"/>
</dbReference>
<dbReference type="Pfam" id="PF16639">
    <property type="entry name" value="Apocytochr_F_N"/>
    <property type="match status" value="1"/>
</dbReference>
<dbReference type="PRINTS" id="PR00610">
    <property type="entry name" value="CYTOCHROMEF"/>
</dbReference>
<dbReference type="SUPFAM" id="SSF103431">
    <property type="entry name" value="Cytochrome f subunit of the cytochrome b6f complex, transmembrane anchor"/>
    <property type="match status" value="1"/>
</dbReference>
<dbReference type="SUPFAM" id="SSF49441">
    <property type="entry name" value="Cytochrome f, large domain"/>
    <property type="match status" value="1"/>
</dbReference>
<dbReference type="SUPFAM" id="SSF51246">
    <property type="entry name" value="Rudiment single hybrid motif"/>
    <property type="match status" value="1"/>
</dbReference>
<dbReference type="PROSITE" id="PS51010">
    <property type="entry name" value="CYTF"/>
    <property type="match status" value="1"/>
</dbReference>